<protein>
    <recommendedName>
        <fullName>Putative uncharacterized protein YAL042C-A</fullName>
    </recommendedName>
</protein>
<sequence>MSSCISPESSIISRFTRSHGIDGNVTSILSSSFACRSRSTTNCGLVTTELNCPHSFTSRNNVVKMHDKVISPPALVRTRTSSSVLANASSDSNVDLFMMSIVSSYVCYITVLLRMYTRHKTSFPL</sequence>
<feature type="chain" id="PRO_0000299655" description="Putative uncharacterized protein YAL042C-A">
    <location>
        <begin position="1"/>
        <end position="125"/>
    </location>
</feature>
<feature type="transmembrane region" description="Helical" evidence="1">
    <location>
        <begin position="96"/>
        <end position="113"/>
    </location>
</feature>
<evidence type="ECO:0000255" key="1"/>
<evidence type="ECO:0000305" key="2"/>
<evidence type="ECO:0000305" key="3">
    <source>
    </source>
</evidence>
<name>YA042_YEAST</name>
<proteinExistence type="uncertain"/>
<keyword id="KW-0472">Membrane</keyword>
<keyword id="KW-0812">Transmembrane</keyword>
<keyword id="KW-1133">Transmembrane helix</keyword>
<gene>
    <name type="ordered locus">YAL042C-A</name>
    <name type="ORF">YAL043C-A</name>
</gene>
<dbReference type="EMBL" id="U12980">
    <property type="protein sequence ID" value="AAC05012.1"/>
    <property type="molecule type" value="Genomic_DNA"/>
</dbReference>
<dbReference type="PIR" id="S53562">
    <property type="entry name" value="S53562"/>
</dbReference>
<dbReference type="PaxDb" id="4932-YAL042C-A"/>
<dbReference type="EnsemblFungi" id="YAL042C-A_mRNA">
    <property type="protein sequence ID" value="YAL042C-A"/>
    <property type="gene ID" value="YAL042C-A"/>
</dbReference>
<dbReference type="AGR" id="SGD:S000002138"/>
<dbReference type="SGD" id="S000002138">
    <property type="gene designation" value="YAL042C-A"/>
</dbReference>
<dbReference type="HOGENOM" id="CLU_1993895_0_0_1"/>
<dbReference type="GO" id="GO:0016020">
    <property type="term" value="C:membrane"/>
    <property type="evidence" value="ECO:0007669"/>
    <property type="project" value="UniProtKB-SubCell"/>
</dbReference>
<organism>
    <name type="scientific">Saccharomyces cerevisiae (strain ATCC 204508 / S288c)</name>
    <name type="common">Baker's yeast</name>
    <dbReference type="NCBI Taxonomy" id="559292"/>
    <lineage>
        <taxon>Eukaryota</taxon>
        <taxon>Fungi</taxon>
        <taxon>Dikarya</taxon>
        <taxon>Ascomycota</taxon>
        <taxon>Saccharomycotina</taxon>
        <taxon>Saccharomycetes</taxon>
        <taxon>Saccharomycetales</taxon>
        <taxon>Saccharomycetaceae</taxon>
        <taxon>Saccharomyces</taxon>
    </lineage>
</organism>
<reference key="1">
    <citation type="journal article" date="1995" name="Proc. Natl. Acad. Sci. U.S.A.">
        <title>The nucleotide sequence of chromosome I from Saccharomyces cerevisiae.</title>
        <authorList>
            <person name="Bussey H."/>
            <person name="Kaback D.B."/>
            <person name="Zhong W.-W."/>
            <person name="Vo D.H."/>
            <person name="Clark M.W."/>
            <person name="Fortin N."/>
            <person name="Hall J."/>
            <person name="Ouellette B.F.F."/>
            <person name="Keng T."/>
            <person name="Barton A.B."/>
            <person name="Su Y."/>
            <person name="Davies C.J."/>
            <person name="Storms R.K."/>
        </authorList>
    </citation>
    <scope>NUCLEOTIDE SEQUENCE [LARGE SCALE GENOMIC DNA]</scope>
    <source>
        <strain>ATCC 204508 / S288c</strain>
    </source>
</reference>
<reference key="2">
    <citation type="journal article" date="2014" name="G3 (Bethesda)">
        <title>The reference genome sequence of Saccharomyces cerevisiae: Then and now.</title>
        <authorList>
            <person name="Engel S.R."/>
            <person name="Dietrich F.S."/>
            <person name="Fisk D.G."/>
            <person name="Binkley G."/>
            <person name="Balakrishnan R."/>
            <person name="Costanzo M.C."/>
            <person name="Dwight S.S."/>
            <person name="Hitz B.C."/>
            <person name="Karra K."/>
            <person name="Nash R.S."/>
            <person name="Weng S."/>
            <person name="Wong E.D."/>
            <person name="Lloyd P."/>
            <person name="Skrzypek M.S."/>
            <person name="Miyasato S.R."/>
            <person name="Simison M."/>
            <person name="Cherry J.M."/>
        </authorList>
    </citation>
    <scope>GENOME REANNOTATION</scope>
    <source>
        <strain>ATCC 204508 / S288c</strain>
    </source>
</reference>
<accession>O13514</accession>
<comment type="subcellular location">
    <subcellularLocation>
        <location evidence="2">Membrane</location>
        <topology evidence="2">Single-pass membrane protein</topology>
    </subcellularLocation>
</comment>
<comment type="miscellaneous">
    <text evidence="2">Partially overlaps ERV46.</text>
</comment>
<comment type="caution">
    <text evidence="3">Product of a dubious gene prediction unlikely to encode a functional protein. Because of that it is not part of the S.cerevisiae S288c complete/reference proteome set.</text>
</comment>